<feature type="chain" id="PRO_0000074656" description="UPF0298 protein BT9727_3675">
    <location>
        <begin position="1"/>
        <end position="88"/>
    </location>
</feature>
<name>Y3675_BACHK</name>
<organism>
    <name type="scientific">Bacillus thuringiensis subsp. konkukian (strain 97-27)</name>
    <dbReference type="NCBI Taxonomy" id="281309"/>
    <lineage>
        <taxon>Bacteria</taxon>
        <taxon>Bacillati</taxon>
        <taxon>Bacillota</taxon>
        <taxon>Bacilli</taxon>
        <taxon>Bacillales</taxon>
        <taxon>Bacillaceae</taxon>
        <taxon>Bacillus</taxon>
        <taxon>Bacillus cereus group</taxon>
    </lineage>
</organism>
<accession>Q6HEN2</accession>
<sequence length="88" mass="10796">MFGQRQSMIVYLHSLKHAKILRKYGNIHYISKRLKYAVVYCDMEQIEHMMQKLNKLPFVKKIEQSYRPYLKTEFENSRPDRAKEYDYS</sequence>
<dbReference type="EMBL" id="AE017355">
    <property type="protein sequence ID" value="AAT61593.1"/>
    <property type="status" value="ALT_INIT"/>
    <property type="molecule type" value="Genomic_DNA"/>
</dbReference>
<dbReference type="RefSeq" id="WP_002080814.1">
    <property type="nucleotide sequence ID" value="NC_005957.1"/>
</dbReference>
<dbReference type="RefSeq" id="YP_037994.1">
    <property type="nucleotide sequence ID" value="NC_005957.1"/>
</dbReference>
<dbReference type="SMR" id="Q6HEN2"/>
<dbReference type="KEGG" id="btk:BT9727_3675"/>
<dbReference type="PATRIC" id="fig|281309.8.peg.3913"/>
<dbReference type="HOGENOM" id="CLU_159890_2_0_9"/>
<dbReference type="Proteomes" id="UP000001301">
    <property type="component" value="Chromosome"/>
</dbReference>
<dbReference type="GO" id="GO:0005737">
    <property type="term" value="C:cytoplasm"/>
    <property type="evidence" value="ECO:0007669"/>
    <property type="project" value="UniProtKB-SubCell"/>
</dbReference>
<dbReference type="HAMAP" id="MF_01126">
    <property type="entry name" value="UPF0298"/>
    <property type="match status" value="1"/>
</dbReference>
<dbReference type="InterPro" id="IPR016979">
    <property type="entry name" value="DUF2129"/>
</dbReference>
<dbReference type="NCBIfam" id="NF002777">
    <property type="entry name" value="PRK02886.1"/>
    <property type="match status" value="1"/>
</dbReference>
<dbReference type="Pfam" id="PF09902">
    <property type="entry name" value="DUF2129"/>
    <property type="match status" value="1"/>
</dbReference>
<dbReference type="PIRSF" id="PIRSF031653">
    <property type="entry name" value="UCP031653"/>
    <property type="match status" value="1"/>
</dbReference>
<keyword id="KW-0963">Cytoplasm</keyword>
<evidence type="ECO:0000255" key="1">
    <source>
        <dbReference type="HAMAP-Rule" id="MF_01126"/>
    </source>
</evidence>
<evidence type="ECO:0000305" key="2"/>
<gene>
    <name type="ordered locus">BT9727_3675</name>
</gene>
<proteinExistence type="inferred from homology"/>
<protein>
    <recommendedName>
        <fullName evidence="1">UPF0298 protein BT9727_3675</fullName>
    </recommendedName>
</protein>
<comment type="subcellular location">
    <subcellularLocation>
        <location evidence="1">Cytoplasm</location>
    </subcellularLocation>
</comment>
<comment type="similarity">
    <text evidence="1">Belongs to the UPF0298 family.</text>
</comment>
<comment type="sequence caution" evidence="2">
    <conflict type="erroneous initiation">
        <sequence resource="EMBL-CDS" id="AAT61593"/>
    </conflict>
</comment>
<reference key="1">
    <citation type="journal article" date="2006" name="J. Bacteriol.">
        <title>Pathogenomic sequence analysis of Bacillus cereus and Bacillus thuringiensis isolates closely related to Bacillus anthracis.</title>
        <authorList>
            <person name="Han C.S."/>
            <person name="Xie G."/>
            <person name="Challacombe J.F."/>
            <person name="Altherr M.R."/>
            <person name="Bhotika S.S."/>
            <person name="Bruce D."/>
            <person name="Campbell C.S."/>
            <person name="Campbell M.L."/>
            <person name="Chen J."/>
            <person name="Chertkov O."/>
            <person name="Cleland C."/>
            <person name="Dimitrijevic M."/>
            <person name="Doggett N.A."/>
            <person name="Fawcett J.J."/>
            <person name="Glavina T."/>
            <person name="Goodwin L.A."/>
            <person name="Hill K.K."/>
            <person name="Hitchcock P."/>
            <person name="Jackson P.J."/>
            <person name="Keim P."/>
            <person name="Kewalramani A.R."/>
            <person name="Longmire J."/>
            <person name="Lucas S."/>
            <person name="Malfatti S."/>
            <person name="McMurry K."/>
            <person name="Meincke L.J."/>
            <person name="Misra M."/>
            <person name="Moseman B.L."/>
            <person name="Mundt M."/>
            <person name="Munk A.C."/>
            <person name="Okinaka R.T."/>
            <person name="Parson-Quintana B."/>
            <person name="Reilly L.P."/>
            <person name="Richardson P."/>
            <person name="Robinson D.L."/>
            <person name="Rubin E."/>
            <person name="Saunders E."/>
            <person name="Tapia R."/>
            <person name="Tesmer J.G."/>
            <person name="Thayer N."/>
            <person name="Thompson L.S."/>
            <person name="Tice H."/>
            <person name="Ticknor L.O."/>
            <person name="Wills P.L."/>
            <person name="Brettin T.S."/>
            <person name="Gilna P."/>
        </authorList>
    </citation>
    <scope>NUCLEOTIDE SEQUENCE [LARGE SCALE GENOMIC DNA]</scope>
    <source>
        <strain>97-27</strain>
    </source>
</reference>